<dbReference type="EC" id="2.4.2.18" evidence="1"/>
<dbReference type="EMBL" id="AP010918">
    <property type="protein sequence ID" value="BAH26486.1"/>
    <property type="molecule type" value="Genomic_DNA"/>
</dbReference>
<dbReference type="RefSeq" id="WP_003411387.1">
    <property type="nucleotide sequence ID" value="NZ_CP014566.1"/>
</dbReference>
<dbReference type="SMR" id="C1AQA7"/>
<dbReference type="GeneID" id="45427983"/>
<dbReference type="KEGG" id="mbt:JTY_2202"/>
<dbReference type="HOGENOM" id="CLU_034315_4_1_11"/>
<dbReference type="UniPathway" id="UPA00035">
    <property type="reaction ID" value="UER00041"/>
</dbReference>
<dbReference type="GO" id="GO:0005829">
    <property type="term" value="C:cytosol"/>
    <property type="evidence" value="ECO:0007669"/>
    <property type="project" value="TreeGrafter"/>
</dbReference>
<dbReference type="GO" id="GO:0004048">
    <property type="term" value="F:anthranilate phosphoribosyltransferase activity"/>
    <property type="evidence" value="ECO:0007669"/>
    <property type="project" value="UniProtKB-UniRule"/>
</dbReference>
<dbReference type="GO" id="GO:0000287">
    <property type="term" value="F:magnesium ion binding"/>
    <property type="evidence" value="ECO:0007669"/>
    <property type="project" value="UniProtKB-UniRule"/>
</dbReference>
<dbReference type="GO" id="GO:0000162">
    <property type="term" value="P:L-tryptophan biosynthetic process"/>
    <property type="evidence" value="ECO:0007669"/>
    <property type="project" value="UniProtKB-UniRule"/>
</dbReference>
<dbReference type="FunFam" id="1.20.970.10:FF:000006">
    <property type="entry name" value="Anthranilate phosphoribosyltransferase"/>
    <property type="match status" value="1"/>
</dbReference>
<dbReference type="FunFam" id="3.40.1030.10:FF:000002">
    <property type="entry name" value="Anthranilate phosphoribosyltransferase"/>
    <property type="match status" value="1"/>
</dbReference>
<dbReference type="Gene3D" id="3.40.1030.10">
    <property type="entry name" value="Nucleoside phosphorylase/phosphoribosyltransferase catalytic domain"/>
    <property type="match status" value="1"/>
</dbReference>
<dbReference type="Gene3D" id="1.20.970.10">
    <property type="entry name" value="Transferase, Pyrimidine Nucleoside Phosphorylase, Chain C"/>
    <property type="match status" value="1"/>
</dbReference>
<dbReference type="HAMAP" id="MF_00211">
    <property type="entry name" value="TrpD"/>
    <property type="match status" value="1"/>
</dbReference>
<dbReference type="InterPro" id="IPR005940">
    <property type="entry name" value="Anthranilate_Pribosyl_Tfrase"/>
</dbReference>
<dbReference type="InterPro" id="IPR000312">
    <property type="entry name" value="Glycosyl_Trfase_fam3"/>
</dbReference>
<dbReference type="InterPro" id="IPR017459">
    <property type="entry name" value="Glycosyl_Trfase_fam3_N_dom"/>
</dbReference>
<dbReference type="InterPro" id="IPR036320">
    <property type="entry name" value="Glycosyl_Trfase_fam3_N_dom_sf"/>
</dbReference>
<dbReference type="InterPro" id="IPR035902">
    <property type="entry name" value="Nuc_phospho_transferase"/>
</dbReference>
<dbReference type="NCBIfam" id="TIGR01245">
    <property type="entry name" value="trpD"/>
    <property type="match status" value="1"/>
</dbReference>
<dbReference type="PANTHER" id="PTHR43285">
    <property type="entry name" value="ANTHRANILATE PHOSPHORIBOSYLTRANSFERASE"/>
    <property type="match status" value="1"/>
</dbReference>
<dbReference type="PANTHER" id="PTHR43285:SF2">
    <property type="entry name" value="ANTHRANILATE PHOSPHORIBOSYLTRANSFERASE"/>
    <property type="match status" value="1"/>
</dbReference>
<dbReference type="Pfam" id="PF02885">
    <property type="entry name" value="Glycos_trans_3N"/>
    <property type="match status" value="1"/>
</dbReference>
<dbReference type="Pfam" id="PF00591">
    <property type="entry name" value="Glycos_transf_3"/>
    <property type="match status" value="1"/>
</dbReference>
<dbReference type="SUPFAM" id="SSF52418">
    <property type="entry name" value="Nucleoside phosphorylase/phosphoribosyltransferase catalytic domain"/>
    <property type="match status" value="1"/>
</dbReference>
<dbReference type="SUPFAM" id="SSF47648">
    <property type="entry name" value="Nucleoside phosphorylase/phosphoribosyltransferase N-terminal domain"/>
    <property type="match status" value="1"/>
</dbReference>
<proteinExistence type="inferred from homology"/>
<sequence>MALSAEGSSGGSRGGSPKAEAASVPSWPQILGRLTDNRDLARGQAAWAMDQIMTGNARPAQIAAFAVAMTMKAPTADEVGELAGVMLSHAHPLPADTVPDDAVDVVGTGGDGVNTVNLSTMAAIVVAAAGVPVVKHGNRAASSLSGGADTLEALGVRIDLGPDLVARSLAEVGIGFCFAPRFHPSYRHAAAVRREIGVPTVFNLLGPLTNPARPRAGLIGCAFADLAEVMAGVFAARRSSVLVVHGDDGLDELTTTTTSTIWRVAAGSVDKLTFDPAGFGFARAQLDQLAGGDAQANAAAVRAVLGGARGPVRDAVVLNAAGAIVAHAGLSSRAEWLPAWEEGLRRASAAIDTGAAEQLLARWVRFGRQI</sequence>
<accession>C1AQA7</accession>
<organism>
    <name type="scientific">Mycobacterium bovis (strain BCG / Tokyo 172 / ATCC 35737 / TMC 1019)</name>
    <dbReference type="NCBI Taxonomy" id="561275"/>
    <lineage>
        <taxon>Bacteria</taxon>
        <taxon>Bacillati</taxon>
        <taxon>Actinomycetota</taxon>
        <taxon>Actinomycetes</taxon>
        <taxon>Mycobacteriales</taxon>
        <taxon>Mycobacteriaceae</taxon>
        <taxon>Mycobacterium</taxon>
        <taxon>Mycobacterium tuberculosis complex</taxon>
    </lineage>
</organism>
<protein>
    <recommendedName>
        <fullName evidence="1">Anthranilate phosphoribosyltransferase</fullName>
        <ecNumber evidence="1">2.4.2.18</ecNumber>
    </recommendedName>
</protein>
<keyword id="KW-0028">Amino-acid biosynthesis</keyword>
<keyword id="KW-0057">Aromatic amino acid biosynthesis</keyword>
<keyword id="KW-0328">Glycosyltransferase</keyword>
<keyword id="KW-0460">Magnesium</keyword>
<keyword id="KW-0479">Metal-binding</keyword>
<keyword id="KW-0808">Transferase</keyword>
<keyword id="KW-0822">Tryptophan biosynthesis</keyword>
<gene>
    <name evidence="1" type="primary">trpD</name>
    <name type="ordered locus">JTY_2202</name>
</gene>
<feature type="chain" id="PRO_1000198832" description="Anthranilate phosphoribosyltransferase">
    <location>
        <begin position="1"/>
        <end position="370"/>
    </location>
</feature>
<feature type="region of interest" description="Disordered" evidence="2">
    <location>
        <begin position="1"/>
        <end position="27"/>
    </location>
</feature>
<feature type="binding site" evidence="1">
    <location>
        <position position="107"/>
    </location>
    <ligand>
        <name>5-phospho-alpha-D-ribose 1-diphosphate</name>
        <dbReference type="ChEBI" id="CHEBI:58017"/>
    </ligand>
</feature>
<feature type="binding site" evidence="1">
    <location>
        <position position="107"/>
    </location>
    <ligand>
        <name>anthranilate</name>
        <dbReference type="ChEBI" id="CHEBI:16567"/>
        <label>1</label>
    </ligand>
</feature>
<feature type="binding site" evidence="1">
    <location>
        <begin position="110"/>
        <end position="111"/>
    </location>
    <ligand>
        <name>5-phospho-alpha-D-ribose 1-diphosphate</name>
        <dbReference type="ChEBI" id="CHEBI:58017"/>
    </ligand>
</feature>
<feature type="binding site" evidence="1">
    <location>
        <position position="115"/>
    </location>
    <ligand>
        <name>5-phospho-alpha-D-ribose 1-diphosphate</name>
        <dbReference type="ChEBI" id="CHEBI:58017"/>
    </ligand>
</feature>
<feature type="binding site" evidence="1">
    <location>
        <begin position="117"/>
        <end position="120"/>
    </location>
    <ligand>
        <name>5-phospho-alpha-D-ribose 1-diphosphate</name>
        <dbReference type="ChEBI" id="CHEBI:58017"/>
    </ligand>
</feature>
<feature type="binding site" evidence="1">
    <location>
        <position position="119"/>
    </location>
    <ligand>
        <name>Mg(2+)</name>
        <dbReference type="ChEBI" id="CHEBI:18420"/>
        <label>1</label>
    </ligand>
</feature>
<feature type="binding site" evidence="1">
    <location>
        <begin position="135"/>
        <end position="143"/>
    </location>
    <ligand>
        <name>5-phospho-alpha-D-ribose 1-diphosphate</name>
        <dbReference type="ChEBI" id="CHEBI:58017"/>
    </ligand>
</feature>
<feature type="binding site" evidence="1">
    <location>
        <position position="138"/>
    </location>
    <ligand>
        <name>anthranilate</name>
        <dbReference type="ChEBI" id="CHEBI:16567"/>
        <label>1</label>
    </ligand>
</feature>
<feature type="binding site" evidence="1">
    <location>
        <position position="147"/>
    </location>
    <ligand>
        <name>5-phospho-alpha-D-ribose 1-diphosphate</name>
        <dbReference type="ChEBI" id="CHEBI:58017"/>
    </ligand>
</feature>
<feature type="binding site" evidence="1">
    <location>
        <position position="193"/>
    </location>
    <ligand>
        <name>anthranilate</name>
        <dbReference type="ChEBI" id="CHEBI:16567"/>
        <label>2</label>
    </ligand>
</feature>
<feature type="binding site" evidence="1">
    <location>
        <position position="251"/>
    </location>
    <ligand>
        <name>Mg(2+)</name>
        <dbReference type="ChEBI" id="CHEBI:18420"/>
        <label>2</label>
    </ligand>
</feature>
<feature type="binding site" evidence="1">
    <location>
        <position position="252"/>
    </location>
    <ligand>
        <name>Mg(2+)</name>
        <dbReference type="ChEBI" id="CHEBI:18420"/>
        <label>1</label>
    </ligand>
</feature>
<feature type="binding site" evidence="1">
    <location>
        <position position="252"/>
    </location>
    <ligand>
        <name>Mg(2+)</name>
        <dbReference type="ChEBI" id="CHEBI:18420"/>
        <label>2</label>
    </ligand>
</feature>
<name>TRPD_MYCBT</name>
<comment type="function">
    <text evidence="1">Catalyzes the transfer of the phosphoribosyl group of 5-phosphorylribose-1-pyrophosphate (PRPP) to anthranilate to yield N-(5'-phosphoribosyl)-anthranilate (PRA).</text>
</comment>
<comment type="catalytic activity">
    <reaction evidence="1">
        <text>N-(5-phospho-beta-D-ribosyl)anthranilate + diphosphate = 5-phospho-alpha-D-ribose 1-diphosphate + anthranilate</text>
        <dbReference type="Rhea" id="RHEA:11768"/>
        <dbReference type="ChEBI" id="CHEBI:16567"/>
        <dbReference type="ChEBI" id="CHEBI:18277"/>
        <dbReference type="ChEBI" id="CHEBI:33019"/>
        <dbReference type="ChEBI" id="CHEBI:58017"/>
        <dbReference type="EC" id="2.4.2.18"/>
    </reaction>
</comment>
<comment type="cofactor">
    <cofactor evidence="1">
        <name>Mg(2+)</name>
        <dbReference type="ChEBI" id="CHEBI:18420"/>
    </cofactor>
    <text evidence="1">Binds 2 magnesium ions per monomer.</text>
</comment>
<comment type="pathway">
    <text evidence="1">Amino-acid biosynthesis; L-tryptophan biosynthesis; L-tryptophan from chorismate: step 2/5.</text>
</comment>
<comment type="subunit">
    <text evidence="1">Homodimer.</text>
</comment>
<comment type="similarity">
    <text evidence="1">Belongs to the anthranilate phosphoribosyltransferase family.</text>
</comment>
<evidence type="ECO:0000255" key="1">
    <source>
        <dbReference type="HAMAP-Rule" id="MF_00211"/>
    </source>
</evidence>
<evidence type="ECO:0000256" key="2">
    <source>
        <dbReference type="SAM" id="MobiDB-lite"/>
    </source>
</evidence>
<reference key="1">
    <citation type="journal article" date="2009" name="Vaccine">
        <title>Whole genome sequence analysis of Mycobacterium bovis bacillus Calmette-Guerin (BCG) Tokyo 172: a comparative study of BCG vaccine substrains.</title>
        <authorList>
            <person name="Seki M."/>
            <person name="Honda I."/>
            <person name="Fujita I."/>
            <person name="Yano I."/>
            <person name="Yamamoto S."/>
            <person name="Koyama A."/>
        </authorList>
    </citation>
    <scope>NUCLEOTIDE SEQUENCE [LARGE SCALE GENOMIC DNA]</scope>
    <source>
        <strain>BCG / Tokyo 172 / ATCC 35737 / TMC 1019</strain>
    </source>
</reference>